<evidence type="ECO:0000250" key="1"/>
<evidence type="ECO:0000255" key="2">
    <source>
        <dbReference type="HAMAP-Rule" id="MF_01109"/>
    </source>
</evidence>
<gene>
    <name evidence="2" type="primary">argF</name>
    <name type="ordered locus">Mlab_0315</name>
</gene>
<keyword id="KW-0028">Amino-acid biosynthesis</keyword>
<keyword id="KW-0055">Arginine biosynthesis</keyword>
<keyword id="KW-0963">Cytoplasm</keyword>
<keyword id="KW-1185">Reference proteome</keyword>
<keyword id="KW-0808">Transferase</keyword>
<protein>
    <recommendedName>
        <fullName evidence="2">Ornithine carbamoyltransferase</fullName>
        <shortName evidence="2">OTCase</shortName>
        <ecNumber evidence="2">2.1.3.3</ecNumber>
    </recommendedName>
</protein>
<comment type="function">
    <text evidence="1">Reversibly catalyzes the transfer of the carbamoyl group from carbamoyl phosphate (CP) to the N(epsilon) atom of ornithine (ORN) to produce L-citrulline.</text>
</comment>
<comment type="catalytic activity">
    <reaction evidence="2">
        <text>carbamoyl phosphate + L-ornithine = L-citrulline + phosphate + H(+)</text>
        <dbReference type="Rhea" id="RHEA:19513"/>
        <dbReference type="ChEBI" id="CHEBI:15378"/>
        <dbReference type="ChEBI" id="CHEBI:43474"/>
        <dbReference type="ChEBI" id="CHEBI:46911"/>
        <dbReference type="ChEBI" id="CHEBI:57743"/>
        <dbReference type="ChEBI" id="CHEBI:58228"/>
        <dbReference type="EC" id="2.1.3.3"/>
    </reaction>
</comment>
<comment type="pathway">
    <text evidence="2">Amino-acid biosynthesis; L-arginine biosynthesis; L-arginine from L-ornithine and carbamoyl phosphate: step 1/3.</text>
</comment>
<comment type="subcellular location">
    <subcellularLocation>
        <location evidence="2">Cytoplasm</location>
    </subcellularLocation>
</comment>
<comment type="similarity">
    <text evidence="2">Belongs to the aspartate/ornithine carbamoyltransferase superfamily. OTCase family.</text>
</comment>
<organism>
    <name type="scientific">Methanocorpusculum labreanum (strain ATCC 43576 / DSM 4855 / Z)</name>
    <dbReference type="NCBI Taxonomy" id="410358"/>
    <lineage>
        <taxon>Archaea</taxon>
        <taxon>Methanobacteriati</taxon>
        <taxon>Methanobacteriota</taxon>
        <taxon>Stenosarchaea group</taxon>
        <taxon>Methanomicrobia</taxon>
        <taxon>Methanomicrobiales</taxon>
        <taxon>Methanocorpusculaceae</taxon>
        <taxon>Methanocorpusculum</taxon>
    </lineage>
</organism>
<name>OTC_METLZ</name>
<feature type="chain" id="PRO_1000084848" description="Ornithine carbamoyltransferase">
    <location>
        <begin position="1"/>
        <end position="305"/>
    </location>
</feature>
<feature type="binding site" evidence="2">
    <location>
        <begin position="52"/>
        <end position="55"/>
    </location>
    <ligand>
        <name>carbamoyl phosphate</name>
        <dbReference type="ChEBI" id="CHEBI:58228"/>
    </ligand>
</feature>
<feature type="binding site" evidence="2">
    <location>
        <position position="79"/>
    </location>
    <ligand>
        <name>carbamoyl phosphate</name>
        <dbReference type="ChEBI" id="CHEBI:58228"/>
    </ligand>
</feature>
<feature type="binding site" evidence="2">
    <location>
        <position position="103"/>
    </location>
    <ligand>
        <name>carbamoyl phosphate</name>
        <dbReference type="ChEBI" id="CHEBI:58228"/>
    </ligand>
</feature>
<feature type="binding site" evidence="2">
    <location>
        <begin position="130"/>
        <end position="133"/>
    </location>
    <ligand>
        <name>carbamoyl phosphate</name>
        <dbReference type="ChEBI" id="CHEBI:58228"/>
    </ligand>
</feature>
<feature type="binding site" evidence="2">
    <location>
        <position position="161"/>
    </location>
    <ligand>
        <name>L-ornithine</name>
        <dbReference type="ChEBI" id="CHEBI:46911"/>
    </ligand>
</feature>
<feature type="binding site" evidence="2">
    <location>
        <position position="221"/>
    </location>
    <ligand>
        <name>L-ornithine</name>
        <dbReference type="ChEBI" id="CHEBI:46911"/>
    </ligand>
</feature>
<feature type="binding site" evidence="2">
    <location>
        <begin position="225"/>
        <end position="226"/>
    </location>
    <ligand>
        <name>L-ornithine</name>
        <dbReference type="ChEBI" id="CHEBI:46911"/>
    </ligand>
</feature>
<feature type="binding site" evidence="2">
    <location>
        <begin position="261"/>
        <end position="262"/>
    </location>
    <ligand>
        <name>carbamoyl phosphate</name>
        <dbReference type="ChEBI" id="CHEBI:58228"/>
    </ligand>
</feature>
<feature type="binding site" evidence="2">
    <location>
        <position position="289"/>
    </location>
    <ligand>
        <name>carbamoyl phosphate</name>
        <dbReference type="ChEBI" id="CHEBI:58228"/>
    </ligand>
</feature>
<sequence>MKKDFLSITDLSAEEYEDILTLAARLKRQRYAGVPHPLLAGKTLAMIFEKASTRTRMSFDVGMYDLGGYALYLNAKDTQLGRGETVADTARVMSRYVHGAIMRTYKHETITEFAKYASIPVINALSDKEHPCQIMADSLTLKEKFGELDGLKIAWIGDGNNVCNSLIMASVQTGMEIAVGTPKGYEPDPAAVKFAKENGGKVTIYDDPVRAVSDAHAIYTDTWISMGEEDIKETKLKDFVGYQLDTALLNKAADDALVLHCLPAHRGEEITDEVIDSMQSGVWDQAENRLHAQKAILVRLMTQGY</sequence>
<proteinExistence type="inferred from homology"/>
<accession>A2SQ85</accession>
<dbReference type="EC" id="2.1.3.3" evidence="2"/>
<dbReference type="EMBL" id="CP000559">
    <property type="protein sequence ID" value="ABN06491.1"/>
    <property type="molecule type" value="Genomic_DNA"/>
</dbReference>
<dbReference type="RefSeq" id="WP_011832692.1">
    <property type="nucleotide sequence ID" value="NC_008942.1"/>
</dbReference>
<dbReference type="SMR" id="A2SQ85"/>
<dbReference type="STRING" id="410358.Mlab_0315"/>
<dbReference type="GeneID" id="4795229"/>
<dbReference type="KEGG" id="mla:Mlab_0315"/>
<dbReference type="eggNOG" id="arCOG00912">
    <property type="taxonomic scope" value="Archaea"/>
</dbReference>
<dbReference type="HOGENOM" id="CLU_043846_3_2_2"/>
<dbReference type="OrthoDB" id="4696at2157"/>
<dbReference type="UniPathway" id="UPA00068">
    <property type="reaction ID" value="UER00112"/>
</dbReference>
<dbReference type="Proteomes" id="UP000000365">
    <property type="component" value="Chromosome"/>
</dbReference>
<dbReference type="GO" id="GO:0005737">
    <property type="term" value="C:cytoplasm"/>
    <property type="evidence" value="ECO:0007669"/>
    <property type="project" value="UniProtKB-SubCell"/>
</dbReference>
<dbReference type="GO" id="GO:0016597">
    <property type="term" value="F:amino acid binding"/>
    <property type="evidence" value="ECO:0007669"/>
    <property type="project" value="InterPro"/>
</dbReference>
<dbReference type="GO" id="GO:0004585">
    <property type="term" value="F:ornithine carbamoyltransferase activity"/>
    <property type="evidence" value="ECO:0007669"/>
    <property type="project" value="UniProtKB-UniRule"/>
</dbReference>
<dbReference type="GO" id="GO:0042450">
    <property type="term" value="P:arginine biosynthetic process via ornithine"/>
    <property type="evidence" value="ECO:0007669"/>
    <property type="project" value="TreeGrafter"/>
</dbReference>
<dbReference type="GO" id="GO:0019240">
    <property type="term" value="P:citrulline biosynthetic process"/>
    <property type="evidence" value="ECO:0007669"/>
    <property type="project" value="TreeGrafter"/>
</dbReference>
<dbReference type="GO" id="GO:0006526">
    <property type="term" value="P:L-arginine biosynthetic process"/>
    <property type="evidence" value="ECO:0007669"/>
    <property type="project" value="UniProtKB-UniRule"/>
</dbReference>
<dbReference type="FunFam" id="3.40.50.1370:FF:000008">
    <property type="entry name" value="Ornithine carbamoyltransferase"/>
    <property type="match status" value="1"/>
</dbReference>
<dbReference type="Gene3D" id="3.40.50.1370">
    <property type="entry name" value="Aspartate/ornithine carbamoyltransferase"/>
    <property type="match status" value="2"/>
</dbReference>
<dbReference type="HAMAP" id="MF_01109">
    <property type="entry name" value="OTCase"/>
    <property type="match status" value="1"/>
</dbReference>
<dbReference type="InterPro" id="IPR006132">
    <property type="entry name" value="Asp/Orn_carbamoyltranf_P-bd"/>
</dbReference>
<dbReference type="InterPro" id="IPR006130">
    <property type="entry name" value="Asp/Orn_carbamoylTrfase"/>
</dbReference>
<dbReference type="InterPro" id="IPR036901">
    <property type="entry name" value="Asp/Orn_carbamoylTrfase_sf"/>
</dbReference>
<dbReference type="InterPro" id="IPR006131">
    <property type="entry name" value="Asp_carbamoyltransf_Asp/Orn-bd"/>
</dbReference>
<dbReference type="InterPro" id="IPR002292">
    <property type="entry name" value="Orn/put_carbamltrans"/>
</dbReference>
<dbReference type="InterPro" id="IPR024904">
    <property type="entry name" value="OTCase_ArgI"/>
</dbReference>
<dbReference type="NCBIfam" id="TIGR00658">
    <property type="entry name" value="orni_carb_tr"/>
    <property type="match status" value="1"/>
</dbReference>
<dbReference type="NCBIfam" id="NF001986">
    <property type="entry name" value="PRK00779.1"/>
    <property type="match status" value="1"/>
</dbReference>
<dbReference type="PANTHER" id="PTHR45753">
    <property type="entry name" value="ORNITHINE CARBAMOYLTRANSFERASE, MITOCHONDRIAL"/>
    <property type="match status" value="1"/>
</dbReference>
<dbReference type="PANTHER" id="PTHR45753:SF3">
    <property type="entry name" value="ORNITHINE TRANSCARBAMYLASE, MITOCHONDRIAL"/>
    <property type="match status" value="1"/>
</dbReference>
<dbReference type="Pfam" id="PF00185">
    <property type="entry name" value="OTCace"/>
    <property type="match status" value="1"/>
</dbReference>
<dbReference type="Pfam" id="PF02729">
    <property type="entry name" value="OTCace_N"/>
    <property type="match status" value="1"/>
</dbReference>
<dbReference type="PRINTS" id="PR00100">
    <property type="entry name" value="AOTCASE"/>
</dbReference>
<dbReference type="PRINTS" id="PR00102">
    <property type="entry name" value="OTCASE"/>
</dbReference>
<dbReference type="SUPFAM" id="SSF53671">
    <property type="entry name" value="Aspartate/ornithine carbamoyltransferase"/>
    <property type="match status" value="1"/>
</dbReference>
<dbReference type="PROSITE" id="PS00097">
    <property type="entry name" value="CARBAMOYLTRANSFERASE"/>
    <property type="match status" value="1"/>
</dbReference>
<reference key="1">
    <citation type="journal article" date="2009" name="Stand. Genomic Sci.">
        <title>Complete genome sequence of Methanocorpusculum labreanum type strain Z.</title>
        <authorList>
            <person name="Anderson I.J."/>
            <person name="Sieprawska-Lupa M."/>
            <person name="Goltsman E."/>
            <person name="Lapidus A."/>
            <person name="Copeland A."/>
            <person name="Glavina Del Rio T."/>
            <person name="Tice H."/>
            <person name="Dalin E."/>
            <person name="Barry K."/>
            <person name="Pitluck S."/>
            <person name="Hauser L."/>
            <person name="Land M."/>
            <person name="Lucas S."/>
            <person name="Richardson P."/>
            <person name="Whitman W.B."/>
            <person name="Kyrpides N.C."/>
        </authorList>
    </citation>
    <scope>NUCLEOTIDE SEQUENCE [LARGE SCALE GENOMIC DNA]</scope>
    <source>
        <strain>ATCC 43576 / DSM 4855 / Z</strain>
    </source>
</reference>